<gene>
    <name evidence="1" type="primary">fhs</name>
    <name type="ordered locus">Cphy_2752</name>
</gene>
<name>FTHS_LACP7</name>
<organism>
    <name type="scientific">Lachnoclostridium phytofermentans (strain ATCC 700394 / DSM 18823 / ISDg)</name>
    <name type="common">Clostridium phytofermentans</name>
    <dbReference type="NCBI Taxonomy" id="357809"/>
    <lineage>
        <taxon>Bacteria</taxon>
        <taxon>Bacillati</taxon>
        <taxon>Bacillota</taxon>
        <taxon>Clostridia</taxon>
        <taxon>Lachnospirales</taxon>
        <taxon>Lachnospiraceae</taxon>
    </lineage>
</organism>
<proteinExistence type="inferred from homology"/>
<accession>A9KNJ5</accession>
<comment type="catalytic activity">
    <reaction evidence="1">
        <text>(6S)-5,6,7,8-tetrahydrofolate + formate + ATP = (6R)-10-formyltetrahydrofolate + ADP + phosphate</text>
        <dbReference type="Rhea" id="RHEA:20221"/>
        <dbReference type="ChEBI" id="CHEBI:15740"/>
        <dbReference type="ChEBI" id="CHEBI:30616"/>
        <dbReference type="ChEBI" id="CHEBI:43474"/>
        <dbReference type="ChEBI" id="CHEBI:57453"/>
        <dbReference type="ChEBI" id="CHEBI:195366"/>
        <dbReference type="ChEBI" id="CHEBI:456216"/>
        <dbReference type="EC" id="6.3.4.3"/>
    </reaction>
</comment>
<comment type="pathway">
    <text evidence="1">One-carbon metabolism; tetrahydrofolate interconversion.</text>
</comment>
<comment type="similarity">
    <text evidence="1">Belongs to the formate--tetrahydrofolate ligase family.</text>
</comment>
<evidence type="ECO:0000255" key="1">
    <source>
        <dbReference type="HAMAP-Rule" id="MF_01543"/>
    </source>
</evidence>
<protein>
    <recommendedName>
        <fullName evidence="1">Formate--tetrahydrofolate ligase</fullName>
        <ecNumber evidence="1">6.3.4.3</ecNumber>
    </recommendedName>
    <alternativeName>
        <fullName evidence="1">Formyltetrahydrofolate synthetase</fullName>
        <shortName evidence="1">FHS</shortName>
        <shortName evidence="1">FTHFS</shortName>
    </alternativeName>
</protein>
<dbReference type="EC" id="6.3.4.3" evidence="1"/>
<dbReference type="EMBL" id="CP000885">
    <property type="protein sequence ID" value="ABX43112.1"/>
    <property type="molecule type" value="Genomic_DNA"/>
</dbReference>
<dbReference type="RefSeq" id="WP_012200763.1">
    <property type="nucleotide sequence ID" value="NC_010001.1"/>
</dbReference>
<dbReference type="SMR" id="A9KNJ5"/>
<dbReference type="STRING" id="357809.Cphy_2752"/>
<dbReference type="KEGG" id="cpy:Cphy_2752"/>
<dbReference type="eggNOG" id="COG2759">
    <property type="taxonomic scope" value="Bacteria"/>
</dbReference>
<dbReference type="HOGENOM" id="CLU_003601_3_3_9"/>
<dbReference type="OrthoDB" id="9761733at2"/>
<dbReference type="UniPathway" id="UPA00193"/>
<dbReference type="Proteomes" id="UP000000370">
    <property type="component" value="Chromosome"/>
</dbReference>
<dbReference type="GO" id="GO:0005524">
    <property type="term" value="F:ATP binding"/>
    <property type="evidence" value="ECO:0007669"/>
    <property type="project" value="UniProtKB-UniRule"/>
</dbReference>
<dbReference type="GO" id="GO:0004329">
    <property type="term" value="F:formate-tetrahydrofolate ligase activity"/>
    <property type="evidence" value="ECO:0007669"/>
    <property type="project" value="UniProtKB-UniRule"/>
</dbReference>
<dbReference type="GO" id="GO:0035999">
    <property type="term" value="P:tetrahydrofolate interconversion"/>
    <property type="evidence" value="ECO:0007669"/>
    <property type="project" value="UniProtKB-UniRule"/>
</dbReference>
<dbReference type="CDD" id="cd00477">
    <property type="entry name" value="FTHFS"/>
    <property type="match status" value="1"/>
</dbReference>
<dbReference type="FunFam" id="3.30.1510.10:FF:000001">
    <property type="entry name" value="Formate--tetrahydrofolate ligase"/>
    <property type="match status" value="1"/>
</dbReference>
<dbReference type="FunFam" id="3.10.410.10:FF:000001">
    <property type="entry name" value="Putative formate--tetrahydrofolate ligase"/>
    <property type="match status" value="1"/>
</dbReference>
<dbReference type="Gene3D" id="3.30.1510.10">
    <property type="entry name" value="Domain 2, N(10)-formyltetrahydrofolate synthetase"/>
    <property type="match status" value="1"/>
</dbReference>
<dbReference type="Gene3D" id="3.10.410.10">
    <property type="entry name" value="Formyltetrahydrofolate synthetase, domain 3"/>
    <property type="match status" value="1"/>
</dbReference>
<dbReference type="Gene3D" id="3.40.50.300">
    <property type="entry name" value="P-loop containing nucleotide triphosphate hydrolases"/>
    <property type="match status" value="1"/>
</dbReference>
<dbReference type="HAMAP" id="MF_01543">
    <property type="entry name" value="FTHFS"/>
    <property type="match status" value="1"/>
</dbReference>
<dbReference type="InterPro" id="IPR000559">
    <property type="entry name" value="Formate_THF_ligase"/>
</dbReference>
<dbReference type="InterPro" id="IPR020628">
    <property type="entry name" value="Formate_THF_ligase_CS"/>
</dbReference>
<dbReference type="InterPro" id="IPR027417">
    <property type="entry name" value="P-loop_NTPase"/>
</dbReference>
<dbReference type="NCBIfam" id="NF010030">
    <property type="entry name" value="PRK13505.1"/>
    <property type="match status" value="1"/>
</dbReference>
<dbReference type="Pfam" id="PF01268">
    <property type="entry name" value="FTHFS"/>
    <property type="match status" value="1"/>
</dbReference>
<dbReference type="SUPFAM" id="SSF52540">
    <property type="entry name" value="P-loop containing nucleoside triphosphate hydrolases"/>
    <property type="match status" value="1"/>
</dbReference>
<dbReference type="PROSITE" id="PS00721">
    <property type="entry name" value="FTHFS_1"/>
    <property type="match status" value="1"/>
</dbReference>
<dbReference type="PROSITE" id="PS00722">
    <property type="entry name" value="FTHFS_2"/>
    <property type="match status" value="1"/>
</dbReference>
<sequence>MKTDIEIAQEAKMIHIREVAKSLGITEDDLDFYGKYKAKFTDELWDEIKDREDGKLILVTAINPTPAGEGKTTTTVGLGQAFGKLEKNAVIALREPSLGPCFGIKGGAAGGGYAQVVPMEDLNLHFTGDFHAITSANNLLAAMLDNHIQQGNTLGIDTNQIVWKRCVDMNDRVLRNIVVGLGRKADGVVREDHFIITVASEIMAILCLASDMNDLKERLSRIIVAYSYEGKPITAKDLHAVGSMAALLKDAIRPNLIQTLENTPAIIHGGPFANIAHGCNSVRATKTALKLADYVITEAGFGADLGAEKFLDIKCRIADLKPAAVVLVATIRALKYNGGVAKTDLSSENLEALEKGIVNLEKHIENIQKFGVPVVVTLNKFSTDTERELSYVKQFCEQRGCEFSLSEVWEKGGEGGIDLANKVIKTIETKESNYHVLYPNEMSLKEKMGTIAKEIYGADGVTFDSGALKEVERLTELGFGNLPVCMAKNQYSLSDDPSKLGRPTNFTVNIREVYVSAGAGFVVAITGTVMTMPGLPKVPAAEHIDVNEEGVITGLF</sequence>
<keyword id="KW-0067">ATP-binding</keyword>
<keyword id="KW-0436">Ligase</keyword>
<keyword id="KW-0547">Nucleotide-binding</keyword>
<keyword id="KW-0554">One-carbon metabolism</keyword>
<keyword id="KW-1185">Reference proteome</keyword>
<feature type="chain" id="PRO_0000333313" description="Formate--tetrahydrofolate ligase">
    <location>
        <begin position="1"/>
        <end position="556"/>
    </location>
</feature>
<feature type="binding site" evidence="1">
    <location>
        <begin position="65"/>
        <end position="72"/>
    </location>
    <ligand>
        <name>ATP</name>
        <dbReference type="ChEBI" id="CHEBI:30616"/>
    </ligand>
</feature>
<reference key="1">
    <citation type="submission" date="2007-11" db="EMBL/GenBank/DDBJ databases">
        <title>Complete genome sequence of Clostridium phytofermentans ISDg.</title>
        <authorList>
            <person name="Leschine S.B."/>
            <person name="Warnick T.A."/>
            <person name="Blanchard J.L."/>
            <person name="Schnell D.J."/>
            <person name="Petit E.L."/>
            <person name="LaTouf W.G."/>
            <person name="Copeland A."/>
            <person name="Lucas S."/>
            <person name="Lapidus A."/>
            <person name="Barry K."/>
            <person name="Glavina del Rio T."/>
            <person name="Dalin E."/>
            <person name="Tice H."/>
            <person name="Pitluck S."/>
            <person name="Kiss H."/>
            <person name="Brettin T."/>
            <person name="Bruce D."/>
            <person name="Detter J.C."/>
            <person name="Han C."/>
            <person name="Kuske C."/>
            <person name="Schmutz J."/>
            <person name="Larimer F."/>
            <person name="Land M."/>
            <person name="Hauser L."/>
            <person name="Kyrpides N."/>
            <person name="Kim E.A."/>
            <person name="Richardson P."/>
        </authorList>
    </citation>
    <scope>NUCLEOTIDE SEQUENCE [LARGE SCALE GENOMIC DNA]</scope>
    <source>
        <strain>ATCC 700394 / DSM 18823 / ISDg</strain>
    </source>
</reference>